<name>RL7_THESQ</name>
<protein>
    <recommendedName>
        <fullName evidence="1">Large ribosomal subunit protein bL12</fullName>
    </recommendedName>
    <alternativeName>
        <fullName evidence="2">50S ribosomal protein L7/L12</fullName>
    </alternativeName>
</protein>
<keyword id="KW-0687">Ribonucleoprotein</keyword>
<keyword id="KW-0689">Ribosomal protein</keyword>
<evidence type="ECO:0000255" key="1">
    <source>
        <dbReference type="HAMAP-Rule" id="MF_00368"/>
    </source>
</evidence>
<evidence type="ECO:0000305" key="2"/>
<sequence length="128" mass="13467">MTIDEIIEAIEKLTVSELAELVKKLEDKFGVTAAAPVAVAAAPVAGAAAGAAQEEKTEFDVVLKSFGQNKIQVIKVVREITGLGLKEAKDLVEKAGSPDAIIKSGVPKQEAEDIKKKLEEAGAEVELK</sequence>
<proteinExistence type="inferred from homology"/>
<dbReference type="EMBL" id="CP000969">
    <property type="protein sequence ID" value="ACB08834.1"/>
    <property type="molecule type" value="Genomic_DNA"/>
</dbReference>
<dbReference type="RefSeq" id="WP_011943105.1">
    <property type="nucleotide sequence ID" value="NC_010483.1"/>
</dbReference>
<dbReference type="SMR" id="B1L936"/>
<dbReference type="KEGG" id="trq:TRQ2_0478"/>
<dbReference type="HOGENOM" id="CLU_086499_3_2_0"/>
<dbReference type="Proteomes" id="UP000001687">
    <property type="component" value="Chromosome"/>
</dbReference>
<dbReference type="GO" id="GO:0022625">
    <property type="term" value="C:cytosolic large ribosomal subunit"/>
    <property type="evidence" value="ECO:0007669"/>
    <property type="project" value="TreeGrafter"/>
</dbReference>
<dbReference type="GO" id="GO:0003729">
    <property type="term" value="F:mRNA binding"/>
    <property type="evidence" value="ECO:0007669"/>
    <property type="project" value="TreeGrafter"/>
</dbReference>
<dbReference type="GO" id="GO:0003735">
    <property type="term" value="F:structural constituent of ribosome"/>
    <property type="evidence" value="ECO:0007669"/>
    <property type="project" value="InterPro"/>
</dbReference>
<dbReference type="GO" id="GO:0006412">
    <property type="term" value="P:translation"/>
    <property type="evidence" value="ECO:0007669"/>
    <property type="project" value="UniProtKB-UniRule"/>
</dbReference>
<dbReference type="CDD" id="cd00387">
    <property type="entry name" value="Ribosomal_L7_L12"/>
    <property type="match status" value="1"/>
</dbReference>
<dbReference type="FunFam" id="1.20.5.710:FF:000008">
    <property type="entry name" value="50S ribosomal protein L7/L12"/>
    <property type="match status" value="1"/>
</dbReference>
<dbReference type="FunFam" id="3.30.1390.10:FF:000001">
    <property type="entry name" value="50S ribosomal protein L7/L12"/>
    <property type="match status" value="1"/>
</dbReference>
<dbReference type="Gene3D" id="3.30.1390.10">
    <property type="match status" value="1"/>
</dbReference>
<dbReference type="Gene3D" id="1.20.5.710">
    <property type="entry name" value="Single helix bin"/>
    <property type="match status" value="1"/>
</dbReference>
<dbReference type="HAMAP" id="MF_00368">
    <property type="entry name" value="Ribosomal_bL12"/>
    <property type="match status" value="1"/>
</dbReference>
<dbReference type="InterPro" id="IPR000206">
    <property type="entry name" value="Ribosomal_bL12"/>
</dbReference>
<dbReference type="InterPro" id="IPR013823">
    <property type="entry name" value="Ribosomal_bL12_C"/>
</dbReference>
<dbReference type="InterPro" id="IPR014719">
    <property type="entry name" value="Ribosomal_bL12_C/ClpS-like"/>
</dbReference>
<dbReference type="InterPro" id="IPR008932">
    <property type="entry name" value="Ribosomal_bL12_oligo"/>
</dbReference>
<dbReference type="InterPro" id="IPR036235">
    <property type="entry name" value="Ribosomal_bL12_oligo_N_sf"/>
</dbReference>
<dbReference type="NCBIfam" id="TIGR00855">
    <property type="entry name" value="L12"/>
    <property type="match status" value="1"/>
</dbReference>
<dbReference type="PANTHER" id="PTHR45987">
    <property type="entry name" value="39S RIBOSOMAL PROTEIN L12"/>
    <property type="match status" value="1"/>
</dbReference>
<dbReference type="PANTHER" id="PTHR45987:SF4">
    <property type="entry name" value="LARGE RIBOSOMAL SUBUNIT PROTEIN BL12M"/>
    <property type="match status" value="1"/>
</dbReference>
<dbReference type="Pfam" id="PF00542">
    <property type="entry name" value="Ribosomal_L12"/>
    <property type="match status" value="1"/>
</dbReference>
<dbReference type="Pfam" id="PF16320">
    <property type="entry name" value="Ribosomal_L12_N"/>
    <property type="match status" value="1"/>
</dbReference>
<dbReference type="SUPFAM" id="SSF54736">
    <property type="entry name" value="ClpS-like"/>
    <property type="match status" value="1"/>
</dbReference>
<dbReference type="SUPFAM" id="SSF48300">
    <property type="entry name" value="Ribosomal protein L7/12, oligomerisation (N-terminal) domain"/>
    <property type="match status" value="1"/>
</dbReference>
<reference key="1">
    <citation type="journal article" date="2011" name="J. Bacteriol.">
        <title>Genome sequence of Thermotoga sp. strain RQ2, a hyperthermophilic bacterium isolated from a geothermally heated region of the seafloor near Ribeira Quente, the Azores.</title>
        <authorList>
            <person name="Swithers K.S."/>
            <person name="DiPippo J.L."/>
            <person name="Bruce D.C."/>
            <person name="Detter C."/>
            <person name="Tapia R."/>
            <person name="Han S."/>
            <person name="Saunders E."/>
            <person name="Goodwin L.A."/>
            <person name="Han J."/>
            <person name="Woyke T."/>
            <person name="Pitluck S."/>
            <person name="Pennacchio L."/>
            <person name="Nolan M."/>
            <person name="Mikhailova N."/>
            <person name="Lykidis A."/>
            <person name="Land M.L."/>
            <person name="Brettin T."/>
            <person name="Stetter K.O."/>
            <person name="Nelson K.E."/>
            <person name="Gogarten J.P."/>
            <person name="Noll K.M."/>
        </authorList>
    </citation>
    <scope>NUCLEOTIDE SEQUENCE [LARGE SCALE GENOMIC DNA]</scope>
    <source>
        <strain>RQ2</strain>
    </source>
</reference>
<comment type="function">
    <text evidence="1">Forms part of the ribosomal stalk which helps the ribosome interact with GTP-bound translation factors. Is thus essential for accurate translation.</text>
</comment>
<comment type="subunit">
    <text evidence="1">Homodimer. Part of the ribosomal stalk of the 50S ribosomal subunit. Forms a multimeric L10(L12)X complex, where L10 forms an elongated spine to which 2 to 4 L12 dimers bind in a sequential fashion. Binds GTP-bound translation factors.</text>
</comment>
<comment type="similarity">
    <text evidence="1">Belongs to the bacterial ribosomal protein bL12 family.</text>
</comment>
<organism>
    <name type="scientific">Thermotoga sp. (strain RQ2)</name>
    <dbReference type="NCBI Taxonomy" id="126740"/>
    <lineage>
        <taxon>Bacteria</taxon>
        <taxon>Thermotogati</taxon>
        <taxon>Thermotogota</taxon>
        <taxon>Thermotogae</taxon>
        <taxon>Thermotogales</taxon>
        <taxon>Thermotogaceae</taxon>
        <taxon>Thermotoga</taxon>
    </lineage>
</organism>
<accession>B1L936</accession>
<gene>
    <name evidence="1" type="primary">rplL</name>
    <name type="ordered locus">TRQ2_0478</name>
</gene>
<feature type="chain" id="PRO_1000121501" description="Large ribosomal subunit protein bL12">
    <location>
        <begin position="1"/>
        <end position="128"/>
    </location>
</feature>